<evidence type="ECO:0000250" key="1">
    <source>
        <dbReference type="UniProtKB" id="P30005"/>
    </source>
</evidence>
<evidence type="ECO:0000255" key="2"/>
<evidence type="ECO:0000256" key="3">
    <source>
        <dbReference type="SAM" id="MobiDB-lite"/>
    </source>
</evidence>
<evidence type="ECO:0000269" key="4">
    <source>
    </source>
</evidence>
<evidence type="ECO:0000305" key="5"/>
<dbReference type="EMBL" id="U43400">
    <property type="protein sequence ID" value="AAC54709.1"/>
    <property type="molecule type" value="Genomic_DNA"/>
</dbReference>
<dbReference type="PIR" id="T41949">
    <property type="entry name" value="T41949"/>
</dbReference>
<dbReference type="RefSeq" id="YP_073787.1">
    <property type="nucleotide sequence ID" value="NC_001716.2"/>
</dbReference>
<dbReference type="SMR" id="P52525"/>
<dbReference type="GlyCosmos" id="P52525">
    <property type="glycosylation" value="11 sites, No reported glycans"/>
</dbReference>
<dbReference type="DNASU" id="3289505"/>
<dbReference type="GeneID" id="3289505"/>
<dbReference type="KEGG" id="vg:3289505"/>
<dbReference type="Proteomes" id="UP000009246">
    <property type="component" value="Segment"/>
</dbReference>
<dbReference type="GO" id="GO:0044423">
    <property type="term" value="C:virion component"/>
    <property type="evidence" value="ECO:0007669"/>
    <property type="project" value="UniProtKB-KW"/>
</dbReference>
<dbReference type="InterPro" id="IPR008645">
    <property type="entry name" value="Roseolovirus_U47"/>
</dbReference>
<dbReference type="Pfam" id="PF05467">
    <property type="entry name" value="Herpes_U47"/>
    <property type="match status" value="1"/>
</dbReference>
<accession>P52525</accession>
<protein>
    <recommendedName>
        <fullName>Glycoprotein U47 homolog</fullName>
    </recommendedName>
</protein>
<proteinExistence type="evidence at protein level"/>
<organism>
    <name type="scientific">Human herpesvirus 7 (strain JI)</name>
    <name type="common">HHV-7</name>
    <name type="synonym">Human T lymphotropic virus</name>
    <dbReference type="NCBI Taxonomy" id="57278"/>
    <lineage>
        <taxon>Viruses</taxon>
        <taxon>Duplodnaviria</taxon>
        <taxon>Heunggongvirae</taxon>
        <taxon>Peploviricota</taxon>
        <taxon>Herviviricetes</taxon>
        <taxon>Herpesvirales</taxon>
        <taxon>Orthoherpesviridae</taxon>
        <taxon>Betaherpesvirinae</taxon>
        <taxon>Roseolovirus</taxon>
        <taxon>Roseolovirus humanbeta7</taxon>
        <taxon>Human betaherpesvirus 7</taxon>
    </lineage>
</organism>
<name>GO_HHV7J</name>
<gene>
    <name type="primary">U47</name>
</gene>
<comment type="subunit">
    <text evidence="4">Interacts with glycoprotein (gH).</text>
</comment>
<comment type="subcellular location">
    <subcellularLocation>
        <location evidence="4">Virion</location>
    </subcellularLocation>
    <text evidence="4">Both the 51 kDa and 49 kDa are present in the virion.</text>
</comment>
<comment type="induction">
    <text evidence="4">Expressed late in the viral replication cycle.</text>
</comment>
<comment type="PTM">
    <text evidence="1">A long 51 kDa and a short 49 kDa protein are produced possibly by proteolytic cleavage.</text>
</comment>
<comment type="PTM">
    <text evidence="4">N-glycosylated with high-mannose and complex glycans.</text>
</comment>
<comment type="similarity">
    <text evidence="5">Belongs to the herpesviridae U47 family.</text>
</comment>
<reference key="1">
    <citation type="journal article" date="1996" name="J. Virol.">
        <title>Determination and analysis of the complete nucleotide sequence of human herpesvirus.</title>
        <authorList>
            <person name="Nicholas J."/>
        </authorList>
    </citation>
    <scope>NUCLEOTIDE SEQUENCE [LARGE SCALE GENOMIC DNA]</scope>
</reference>
<reference key="2">
    <citation type="journal article" date="2006" name="J. Gen. Virol.">
        <title>Human herpesvirus 7 U47 gene products are glycoproteins expressed in virions and associate with glycoprotein H.</title>
        <authorList>
            <person name="Sadaoka T."/>
            <person name="Yamanishi K."/>
            <person name="Mori Y."/>
        </authorList>
    </citation>
    <scope>SUBCELLULAR LOCATION</scope>
    <scope>INTERACTION WITH GLYCOPROTEIN H</scope>
    <scope>INDUCTION</scope>
</reference>
<organismHost>
    <name type="scientific">Homo sapiens</name>
    <name type="common">Human</name>
    <dbReference type="NCBI Taxonomy" id="9606"/>
</organismHost>
<feature type="chain" id="PRO_0000116324" description="Glycoprotein U47 homolog">
    <location>
        <begin position="1"/>
        <end position="313"/>
    </location>
</feature>
<feature type="region of interest" description="Disordered" evidence="3">
    <location>
        <begin position="274"/>
        <end position="313"/>
    </location>
</feature>
<feature type="compositionally biased region" description="Low complexity" evidence="3">
    <location>
        <begin position="287"/>
        <end position="313"/>
    </location>
</feature>
<feature type="glycosylation site" description="N-linked (GlcNAc...) asparagine; by host" evidence="2">
    <location>
        <position position="40"/>
    </location>
</feature>
<feature type="glycosylation site" description="N-linked (GlcNAc...) asparagine; by host" evidence="2">
    <location>
        <position position="43"/>
    </location>
</feature>
<feature type="glycosylation site" description="N-linked (GlcNAc...) asparagine; by host" evidence="2">
    <location>
        <position position="127"/>
    </location>
</feature>
<feature type="glycosylation site" description="N-linked (GlcNAc...) asparagine; by host" evidence="2">
    <location>
        <position position="164"/>
    </location>
</feature>
<feature type="glycosylation site" description="N-linked (GlcNAc...) asparagine; by host" evidence="2">
    <location>
        <position position="179"/>
    </location>
</feature>
<feature type="glycosylation site" description="N-linked (GlcNAc...) asparagine; by host" evidence="2">
    <location>
        <position position="207"/>
    </location>
</feature>
<feature type="glycosylation site" description="N-linked (GlcNAc...) asparagine; by host" evidence="2">
    <location>
        <position position="227"/>
    </location>
</feature>
<feature type="glycosylation site" description="N-linked (GlcNAc...) asparagine; by host" evidence="2">
    <location>
        <position position="236"/>
    </location>
</feature>
<feature type="glycosylation site" description="N-linked (GlcNAc...) asparagine; by host" evidence="2">
    <location>
        <position position="259"/>
    </location>
</feature>
<feature type="glycosylation site" description="N-linked (GlcNAc...) asparagine; by host" evidence="2">
    <location>
        <position position="307"/>
    </location>
</feature>
<feature type="glycosylation site" description="N-linked (GlcNAc...) asparagine; by host" evidence="2">
    <location>
        <position position="310"/>
    </location>
</feature>
<keyword id="KW-0325">Glycoprotein</keyword>
<keyword id="KW-0426">Late protein</keyword>
<keyword id="KW-1185">Reference proteome</keyword>
<keyword id="KW-0946">Virion</keyword>
<sequence>MKNKMYSMLVFTLISFLFYSYLIIWTPVLSVCSEKISFVNLTNFSMWPKFAKFHYESFEKTYIQSCDIPISKNCFKQILFWSFRLSQKKNICLSKINMLYLDNFPRWTLHFEFPTKTNRKRHVYLDNISFLYLVFATLAFKTMDDSCVNKIPFEVLASHLFKINFSQNKIETIFQDLQNHTEAQLFSRENSEQLFSFTNFIYYFVYNRTDCKNSISKFFYNSVNTRNVSTPFGVTNFSLVRGIMSPIQSFKGNLMFLENKTKVTKPTAIPNAVTSEPTKFFPSTRGTSSMQASQQTSSFPTTFFTTNHSNTST</sequence>